<evidence type="ECO:0000255" key="1">
    <source>
        <dbReference type="HAMAP-Rule" id="MF_01346"/>
    </source>
</evidence>
<comment type="function">
    <text evidence="1">Produces ATP from ADP in the presence of a proton gradient across the membrane. The alpha chain is a regulatory subunit.</text>
</comment>
<comment type="catalytic activity">
    <reaction evidence="1">
        <text>ATP + H2O + 4 H(+)(in) = ADP + phosphate + 5 H(+)(out)</text>
        <dbReference type="Rhea" id="RHEA:57720"/>
        <dbReference type="ChEBI" id="CHEBI:15377"/>
        <dbReference type="ChEBI" id="CHEBI:15378"/>
        <dbReference type="ChEBI" id="CHEBI:30616"/>
        <dbReference type="ChEBI" id="CHEBI:43474"/>
        <dbReference type="ChEBI" id="CHEBI:456216"/>
        <dbReference type="EC" id="7.1.2.2"/>
    </reaction>
</comment>
<comment type="subunit">
    <text evidence="1">F-type ATPases have 2 components, CF(1) - the catalytic core - and CF(0) - the membrane proton channel. CF(1) has five subunits: alpha(3), beta(3), gamma(1), delta(1), epsilon(1). CF(0) has three main subunits: a(1), b(2) and c(9-12). The alpha and beta chains form an alternating ring which encloses part of the gamma chain. CF(1) is attached to CF(0) by a central stalk formed by the gamma and epsilon chains, while a peripheral stalk is formed by the delta and b chains.</text>
</comment>
<comment type="subcellular location">
    <subcellularLocation>
        <location evidence="1">Cell inner membrane</location>
        <topology evidence="1">Peripheral membrane protein</topology>
    </subcellularLocation>
</comment>
<comment type="similarity">
    <text evidence="1">Belongs to the ATPase alpha/beta chains family.</text>
</comment>
<feature type="chain" id="PRO_1000143454" description="ATP synthase subunit alpha">
    <location>
        <begin position="1"/>
        <end position="509"/>
    </location>
</feature>
<feature type="binding site" evidence="1">
    <location>
        <begin position="169"/>
        <end position="176"/>
    </location>
    <ligand>
        <name>ATP</name>
        <dbReference type="ChEBI" id="CHEBI:30616"/>
    </ligand>
</feature>
<feature type="site" description="Required for activity" evidence="1">
    <location>
        <position position="370"/>
    </location>
</feature>
<protein>
    <recommendedName>
        <fullName evidence="1">ATP synthase subunit alpha</fullName>
        <ecNumber evidence="1">7.1.2.2</ecNumber>
    </recommendedName>
    <alternativeName>
        <fullName evidence="1">ATP synthase F1 sector subunit alpha</fullName>
    </alternativeName>
    <alternativeName>
        <fullName evidence="1">F-ATPase subunit alpha</fullName>
    </alternativeName>
</protein>
<organism>
    <name type="scientific">Xanthobacter autotrophicus (strain ATCC BAA-1158 / Py2)</name>
    <dbReference type="NCBI Taxonomy" id="78245"/>
    <lineage>
        <taxon>Bacteria</taxon>
        <taxon>Pseudomonadati</taxon>
        <taxon>Pseudomonadota</taxon>
        <taxon>Alphaproteobacteria</taxon>
        <taxon>Hyphomicrobiales</taxon>
        <taxon>Xanthobacteraceae</taxon>
        <taxon>Xanthobacter</taxon>
    </lineage>
</organism>
<proteinExistence type="inferred from homology"/>
<reference key="1">
    <citation type="submission" date="2007-07" db="EMBL/GenBank/DDBJ databases">
        <title>Complete sequence of chromosome of Xanthobacter autotrophicus Py2.</title>
        <authorList>
            <consortium name="US DOE Joint Genome Institute"/>
            <person name="Copeland A."/>
            <person name="Lucas S."/>
            <person name="Lapidus A."/>
            <person name="Barry K."/>
            <person name="Glavina del Rio T."/>
            <person name="Hammon N."/>
            <person name="Israni S."/>
            <person name="Dalin E."/>
            <person name="Tice H."/>
            <person name="Pitluck S."/>
            <person name="Sims D."/>
            <person name="Brettin T."/>
            <person name="Bruce D."/>
            <person name="Detter J.C."/>
            <person name="Han C."/>
            <person name="Tapia R."/>
            <person name="Brainard J."/>
            <person name="Schmutz J."/>
            <person name="Larimer F."/>
            <person name="Land M."/>
            <person name="Hauser L."/>
            <person name="Kyrpides N."/>
            <person name="Kim E."/>
            <person name="Ensigns S.A."/>
            <person name="Richardson P."/>
        </authorList>
    </citation>
    <scope>NUCLEOTIDE SEQUENCE [LARGE SCALE GENOMIC DNA]</scope>
    <source>
        <strain>ATCC BAA-1158 / Py2</strain>
    </source>
</reference>
<sequence length="509" mass="55190">MDIRAAEITAILKEQIQNFGQEAEVSEVGQVLSVGDGIARVYGLDNVQAGEMVEFENGTRGMALNLEIDNVGIVIFGSDREIKEGQTVKRTRAIVDAPVGKGLLGRVVDALGNPIDGKGPIVYTERRRVDVKAPGIIPRKSVHEPMQTGLKAIDALIPIGRGQRELIIGDRQTGKTAVALDSILNQKPINQGTDEKAKLYCVYVAVGQKRSTVAQFVKVLEEQGALEYSIVVAATASDAAPMQFLAPFTGTAMGEYFRDNGMHALIIHDDLSKQAVAYRQMSLLLRRPPGREAYPGDVFYLHSRLLERAAKLNDSLGAGSLTALPVIETQANDVSAYIPTNVISITDGQIFLESDLFYQGIRPAVNVGLSVSRVGSSAQIKAMKQVAGKIKGELAQYRELAAFAQFGSDLDASTQKLLNRGARLTELLKQSQFSPLKVEEQVAVIFAGTNGYLDPLPVSKVREFEQGLLLALRSQHPEILEAIRSSKEISKDTTEKLTKALDAFAKSFA</sequence>
<gene>
    <name evidence="1" type="primary">atpA</name>
    <name type="ordered locus">Xaut_2078</name>
</gene>
<accession>A7IH29</accession>
<name>ATPA_XANP2</name>
<dbReference type="EC" id="7.1.2.2" evidence="1"/>
<dbReference type="EMBL" id="CP000781">
    <property type="protein sequence ID" value="ABS67322.1"/>
    <property type="molecule type" value="Genomic_DNA"/>
</dbReference>
<dbReference type="SMR" id="A7IH29"/>
<dbReference type="STRING" id="78245.Xaut_2078"/>
<dbReference type="KEGG" id="xau:Xaut_2078"/>
<dbReference type="eggNOG" id="COG0056">
    <property type="taxonomic scope" value="Bacteria"/>
</dbReference>
<dbReference type="HOGENOM" id="CLU_010091_2_1_5"/>
<dbReference type="OrthoDB" id="9803053at2"/>
<dbReference type="PhylomeDB" id="A7IH29"/>
<dbReference type="Proteomes" id="UP000002417">
    <property type="component" value="Chromosome"/>
</dbReference>
<dbReference type="GO" id="GO:0005886">
    <property type="term" value="C:plasma membrane"/>
    <property type="evidence" value="ECO:0007669"/>
    <property type="project" value="UniProtKB-SubCell"/>
</dbReference>
<dbReference type="GO" id="GO:0045259">
    <property type="term" value="C:proton-transporting ATP synthase complex"/>
    <property type="evidence" value="ECO:0007669"/>
    <property type="project" value="UniProtKB-KW"/>
</dbReference>
<dbReference type="GO" id="GO:0043531">
    <property type="term" value="F:ADP binding"/>
    <property type="evidence" value="ECO:0007669"/>
    <property type="project" value="TreeGrafter"/>
</dbReference>
<dbReference type="GO" id="GO:0005524">
    <property type="term" value="F:ATP binding"/>
    <property type="evidence" value="ECO:0007669"/>
    <property type="project" value="UniProtKB-UniRule"/>
</dbReference>
<dbReference type="GO" id="GO:0046933">
    <property type="term" value="F:proton-transporting ATP synthase activity, rotational mechanism"/>
    <property type="evidence" value="ECO:0007669"/>
    <property type="project" value="UniProtKB-UniRule"/>
</dbReference>
<dbReference type="CDD" id="cd18113">
    <property type="entry name" value="ATP-synt_F1_alpha_C"/>
    <property type="match status" value="1"/>
</dbReference>
<dbReference type="CDD" id="cd18116">
    <property type="entry name" value="ATP-synt_F1_alpha_N"/>
    <property type="match status" value="1"/>
</dbReference>
<dbReference type="CDD" id="cd01132">
    <property type="entry name" value="F1-ATPase_alpha_CD"/>
    <property type="match status" value="1"/>
</dbReference>
<dbReference type="FunFam" id="1.20.150.20:FF:000001">
    <property type="entry name" value="ATP synthase subunit alpha"/>
    <property type="match status" value="1"/>
</dbReference>
<dbReference type="FunFam" id="2.40.30.20:FF:000001">
    <property type="entry name" value="ATP synthase subunit alpha"/>
    <property type="match status" value="1"/>
</dbReference>
<dbReference type="FunFam" id="3.40.50.300:FF:002432">
    <property type="entry name" value="ATP synthase subunit alpha, mitochondrial"/>
    <property type="match status" value="1"/>
</dbReference>
<dbReference type="Gene3D" id="2.40.30.20">
    <property type="match status" value="1"/>
</dbReference>
<dbReference type="Gene3D" id="1.20.150.20">
    <property type="entry name" value="ATP synthase alpha/beta chain, C-terminal domain"/>
    <property type="match status" value="1"/>
</dbReference>
<dbReference type="Gene3D" id="3.40.50.300">
    <property type="entry name" value="P-loop containing nucleotide triphosphate hydrolases"/>
    <property type="match status" value="1"/>
</dbReference>
<dbReference type="HAMAP" id="MF_01346">
    <property type="entry name" value="ATP_synth_alpha_bact"/>
    <property type="match status" value="1"/>
</dbReference>
<dbReference type="InterPro" id="IPR023366">
    <property type="entry name" value="ATP_synth_asu-like_sf"/>
</dbReference>
<dbReference type="InterPro" id="IPR000793">
    <property type="entry name" value="ATP_synth_asu_C"/>
</dbReference>
<dbReference type="InterPro" id="IPR038376">
    <property type="entry name" value="ATP_synth_asu_C_sf"/>
</dbReference>
<dbReference type="InterPro" id="IPR033732">
    <property type="entry name" value="ATP_synth_F1_a_nt-bd_dom"/>
</dbReference>
<dbReference type="InterPro" id="IPR005294">
    <property type="entry name" value="ATP_synth_F1_asu"/>
</dbReference>
<dbReference type="InterPro" id="IPR020003">
    <property type="entry name" value="ATPase_a/bsu_AS"/>
</dbReference>
<dbReference type="InterPro" id="IPR004100">
    <property type="entry name" value="ATPase_F1/V1/A1_a/bsu_N"/>
</dbReference>
<dbReference type="InterPro" id="IPR036121">
    <property type="entry name" value="ATPase_F1/V1/A1_a/bsu_N_sf"/>
</dbReference>
<dbReference type="InterPro" id="IPR000194">
    <property type="entry name" value="ATPase_F1/V1/A1_a/bsu_nucl-bd"/>
</dbReference>
<dbReference type="InterPro" id="IPR027417">
    <property type="entry name" value="P-loop_NTPase"/>
</dbReference>
<dbReference type="NCBIfam" id="TIGR00962">
    <property type="entry name" value="atpA"/>
    <property type="match status" value="1"/>
</dbReference>
<dbReference type="NCBIfam" id="NF009884">
    <property type="entry name" value="PRK13343.1"/>
    <property type="match status" value="1"/>
</dbReference>
<dbReference type="PANTHER" id="PTHR48082">
    <property type="entry name" value="ATP SYNTHASE SUBUNIT ALPHA, MITOCHONDRIAL"/>
    <property type="match status" value="1"/>
</dbReference>
<dbReference type="PANTHER" id="PTHR48082:SF2">
    <property type="entry name" value="ATP SYNTHASE SUBUNIT ALPHA, MITOCHONDRIAL"/>
    <property type="match status" value="1"/>
</dbReference>
<dbReference type="Pfam" id="PF00006">
    <property type="entry name" value="ATP-synt_ab"/>
    <property type="match status" value="1"/>
</dbReference>
<dbReference type="Pfam" id="PF00306">
    <property type="entry name" value="ATP-synt_ab_C"/>
    <property type="match status" value="1"/>
</dbReference>
<dbReference type="Pfam" id="PF02874">
    <property type="entry name" value="ATP-synt_ab_N"/>
    <property type="match status" value="1"/>
</dbReference>
<dbReference type="PIRSF" id="PIRSF039088">
    <property type="entry name" value="F_ATPase_subunit_alpha"/>
    <property type="match status" value="1"/>
</dbReference>
<dbReference type="SUPFAM" id="SSF47917">
    <property type="entry name" value="C-terminal domain of alpha and beta subunits of F1 ATP synthase"/>
    <property type="match status" value="1"/>
</dbReference>
<dbReference type="SUPFAM" id="SSF50615">
    <property type="entry name" value="N-terminal domain of alpha and beta subunits of F1 ATP synthase"/>
    <property type="match status" value="1"/>
</dbReference>
<dbReference type="SUPFAM" id="SSF52540">
    <property type="entry name" value="P-loop containing nucleoside triphosphate hydrolases"/>
    <property type="match status" value="1"/>
</dbReference>
<dbReference type="PROSITE" id="PS00152">
    <property type="entry name" value="ATPASE_ALPHA_BETA"/>
    <property type="match status" value="1"/>
</dbReference>
<keyword id="KW-0066">ATP synthesis</keyword>
<keyword id="KW-0067">ATP-binding</keyword>
<keyword id="KW-0997">Cell inner membrane</keyword>
<keyword id="KW-1003">Cell membrane</keyword>
<keyword id="KW-0139">CF(1)</keyword>
<keyword id="KW-0375">Hydrogen ion transport</keyword>
<keyword id="KW-0406">Ion transport</keyword>
<keyword id="KW-0472">Membrane</keyword>
<keyword id="KW-0547">Nucleotide-binding</keyword>
<keyword id="KW-1185">Reference proteome</keyword>
<keyword id="KW-1278">Translocase</keyword>
<keyword id="KW-0813">Transport</keyword>